<dbReference type="EC" id="3.4.24.-"/>
<dbReference type="EMBL" id="AY283572">
    <property type="protein sequence ID" value="AAQ21097.1"/>
    <property type="molecule type" value="Genomic_DNA"/>
</dbReference>
<dbReference type="SMR" id="Q6WIH5"/>
<dbReference type="MEROPS" id="M36.001"/>
<dbReference type="GlyCosmos" id="Q6WIH5">
    <property type="glycosylation" value="4 sites, No reported glycans"/>
</dbReference>
<dbReference type="PHI-base" id="PHI:4970"/>
<dbReference type="GO" id="GO:0005576">
    <property type="term" value="C:extracellular region"/>
    <property type="evidence" value="ECO:0007669"/>
    <property type="project" value="UniProtKB-SubCell"/>
</dbReference>
<dbReference type="GO" id="GO:0004222">
    <property type="term" value="F:metalloendopeptidase activity"/>
    <property type="evidence" value="ECO:0007669"/>
    <property type="project" value="InterPro"/>
</dbReference>
<dbReference type="GO" id="GO:0008270">
    <property type="term" value="F:zinc ion binding"/>
    <property type="evidence" value="ECO:0007669"/>
    <property type="project" value="InterPro"/>
</dbReference>
<dbReference type="GO" id="GO:0006508">
    <property type="term" value="P:proteolysis"/>
    <property type="evidence" value="ECO:0007669"/>
    <property type="project" value="UniProtKB-KW"/>
</dbReference>
<dbReference type="CDD" id="cd09596">
    <property type="entry name" value="M36"/>
    <property type="match status" value="1"/>
</dbReference>
<dbReference type="Gene3D" id="3.10.170.10">
    <property type="match status" value="1"/>
</dbReference>
<dbReference type="Gene3D" id="1.10.390.10">
    <property type="entry name" value="Neutral Protease Domain 2"/>
    <property type="match status" value="1"/>
</dbReference>
<dbReference type="InterPro" id="IPR011096">
    <property type="entry name" value="FTP_domain"/>
</dbReference>
<dbReference type="InterPro" id="IPR050371">
    <property type="entry name" value="Fungal_virulence_M36"/>
</dbReference>
<dbReference type="InterPro" id="IPR001842">
    <property type="entry name" value="Peptidase_M36"/>
</dbReference>
<dbReference type="InterPro" id="IPR027268">
    <property type="entry name" value="Peptidase_M4/M1_CTD_sf"/>
</dbReference>
<dbReference type="PANTHER" id="PTHR33478">
    <property type="entry name" value="EXTRACELLULAR METALLOPROTEINASE MEP"/>
    <property type="match status" value="1"/>
</dbReference>
<dbReference type="PANTHER" id="PTHR33478:SF1">
    <property type="entry name" value="EXTRACELLULAR METALLOPROTEINASE MEP"/>
    <property type="match status" value="1"/>
</dbReference>
<dbReference type="Pfam" id="PF07504">
    <property type="entry name" value="FTP"/>
    <property type="match status" value="1"/>
</dbReference>
<dbReference type="Pfam" id="PF02128">
    <property type="entry name" value="Peptidase_M36"/>
    <property type="match status" value="1"/>
</dbReference>
<dbReference type="PRINTS" id="PR00999">
    <property type="entry name" value="FUNGALYSIN"/>
</dbReference>
<dbReference type="SUPFAM" id="SSF55486">
    <property type="entry name" value="Metalloproteases ('zincins'), catalytic domain"/>
    <property type="match status" value="1"/>
</dbReference>
<dbReference type="PROSITE" id="PS00142">
    <property type="entry name" value="ZINC_PROTEASE"/>
    <property type="match status" value="1"/>
</dbReference>
<feature type="signal peptide" evidence="2">
    <location>
        <begin position="1"/>
        <end position="19"/>
    </location>
</feature>
<feature type="propeptide" id="PRO_0000380832" evidence="1">
    <location>
        <begin position="20"/>
        <end position="246"/>
    </location>
</feature>
<feature type="chain" id="PRO_0000380833" description="Extracellular metalloproteinase 1">
    <location>
        <begin position="247"/>
        <end position="635"/>
    </location>
</feature>
<feature type="active site" evidence="3">
    <location>
        <position position="431"/>
    </location>
</feature>
<feature type="binding site" evidence="3">
    <location>
        <position position="430"/>
    </location>
    <ligand>
        <name>Zn(2+)</name>
        <dbReference type="ChEBI" id="CHEBI:29105"/>
        <note>catalytic</note>
    </ligand>
</feature>
<feature type="binding site" evidence="3">
    <location>
        <position position="434"/>
    </location>
    <ligand>
        <name>Zn(2+)</name>
        <dbReference type="ChEBI" id="CHEBI:29105"/>
        <note>catalytic</note>
    </ligand>
</feature>
<feature type="glycosylation site" description="N-linked (GlcNAc...) asparagine" evidence="2">
    <location>
        <position position="287"/>
    </location>
</feature>
<feature type="glycosylation site" description="N-linked (GlcNAc...) asparagine" evidence="2">
    <location>
        <position position="475"/>
    </location>
</feature>
<feature type="glycosylation site" description="N-linked (GlcNAc...) asparagine" evidence="2">
    <location>
        <position position="594"/>
    </location>
</feature>
<feature type="glycosylation site" description="N-linked (GlcNAc...) asparagine" evidence="2">
    <location>
        <position position="623"/>
    </location>
</feature>
<name>MEP1_ARTBE</name>
<organism>
    <name type="scientific">Arthroderma benhamiae</name>
    <name type="common">Trichophyton mentagrophytes</name>
    <dbReference type="NCBI Taxonomy" id="63400"/>
    <lineage>
        <taxon>Eukaryota</taxon>
        <taxon>Fungi</taxon>
        <taxon>Dikarya</taxon>
        <taxon>Ascomycota</taxon>
        <taxon>Pezizomycotina</taxon>
        <taxon>Eurotiomycetes</taxon>
        <taxon>Eurotiomycetidae</taxon>
        <taxon>Onygenales</taxon>
        <taxon>Arthrodermataceae</taxon>
        <taxon>Trichophyton</taxon>
    </lineage>
</organism>
<sequence>MHGLLLAAGLLSLPLHVLAHPQPSTSTSLAGRAGAVDLNEFRVAHRSSYTSHDEMKKLPSIASFRQGTYLEVATELVKQTMPNMEFRLVDDHYVGDSGIGHVRFRQTMHGIDIDNSDFNVNVGKNGKVLSHGNSFYTGPAPASNPMVKRDFIDPMQALNGVRKALNLPVKADGAHVENMSEHKVMFKGTSGALSDPTAKLCYMAKEDGSLALTWRVETDIGDNWLLSYMDAKESSKVHNVVDYVAHATFQVYKWGLADPTEGKRDILTNPWNLKTSPLTWLADGKTNFTATRGNNAIAQYNPDGGNDYENNYRPSPKNLKFEYPYSPDMNPPKTYIDASVTQLFYTSNVCHDLYYMLGFNEKAGNFQVNNRGQGGKGNDYVILNAQDGSGTNNANFATPPDGQPGRMRAYIWTRANPPRDASFEAGTIIHEYTHGLSNRLCGGPANSRCLNALESGGMGEGWGDFYATAVRLKPNDTRKTNYVKGGWVNNSPKGVRMYPYSTDMNVNPLVYTSNNKLNEVHAIGTVWCTMLYEVLWNLIDKHGKNDGPVPVFENGVPNDGKYLAMKLVMDGMAIQPCNPNFVQARDAILDADMNLTKGANKCEIWKGFAKRGLGVGAKFDPKNRTGSNQVPNECK</sequence>
<evidence type="ECO:0000250" key="1"/>
<evidence type="ECO:0000255" key="2"/>
<evidence type="ECO:0000255" key="3">
    <source>
        <dbReference type="PROSITE-ProRule" id="PRU10095"/>
    </source>
</evidence>
<evidence type="ECO:0000305" key="4"/>
<gene>
    <name type="primary">MEP1</name>
</gene>
<protein>
    <recommendedName>
        <fullName>Extracellular metalloproteinase 1</fullName>
        <ecNumber>3.4.24.-</ecNumber>
    </recommendedName>
    <alternativeName>
        <fullName>Fungalysin MEP1</fullName>
    </alternativeName>
</protein>
<reference key="1">
    <citation type="journal article" date="2004" name="Microbiology">
        <title>Multiplication of an ancestral gene encoding secreted fungalysin preceded species differentiation in the dermatophytes Trichophyton and Microsporum.</title>
        <authorList>
            <person name="Jousson O."/>
            <person name="Lechenne B."/>
            <person name="Bontems O."/>
            <person name="Capoccia S."/>
            <person name="Mignon B."/>
            <person name="Barblan J."/>
            <person name="Quadroni M."/>
            <person name="Monod M."/>
        </authorList>
    </citation>
    <scope>NUCLEOTIDE SEQUENCE [GENOMIC DNA]</scope>
</reference>
<proteinExistence type="inferred from homology"/>
<keyword id="KW-0325">Glycoprotein</keyword>
<keyword id="KW-0378">Hydrolase</keyword>
<keyword id="KW-0479">Metal-binding</keyword>
<keyword id="KW-0482">Metalloprotease</keyword>
<keyword id="KW-0645">Protease</keyword>
<keyword id="KW-0964">Secreted</keyword>
<keyword id="KW-0732">Signal</keyword>
<keyword id="KW-0843">Virulence</keyword>
<keyword id="KW-0862">Zinc</keyword>
<keyword id="KW-0865">Zymogen</keyword>
<comment type="function">
    <text evidence="1">Secreted metalloproteinase probably acting as a virulence factor.</text>
</comment>
<comment type="cofactor">
    <cofactor evidence="1">
        <name>Zn(2+)</name>
        <dbReference type="ChEBI" id="CHEBI:29105"/>
    </cofactor>
    <text evidence="1">Binds 1 zinc ion per subunit.</text>
</comment>
<comment type="subcellular location">
    <subcellularLocation>
        <location evidence="1">Secreted</location>
    </subcellularLocation>
</comment>
<comment type="similarity">
    <text evidence="4">Belongs to the peptidase M36 family.</text>
</comment>
<accession>Q6WIH5</accession>